<sequence>MTGCSPVFTMQQVVGVSHRLVWRTFRGTDLLMTRTLCSPGPSRPGEKRPEAAALGLYHRLPELGRTLSHTIRNQAASTAKAWWDRYEEFVGLNEVREAQGNVTEAEKVFMVARGLVREAREDLEAQQTKLKEVRDRLDRVSREDNQYLELATLEHRMLQEEKRLRIAYLRAEDSEREKFSLFSAAVRESHEKERTRAERTKNWSLIGSVLGALIGVAGSTYVNRVRLQELKALLLEAQKGPVSLQEAIREQASSYSLQQKDLQNLMVDLRGLVHVGQDQGSGSPTGPSSPRGKDIDGLSAAMKEQLNHSRQVYSCLEGLREQLDSLEKTCSQMAGVVRLAKVPAHPGMVEPLDGALPSSLLEHGSTMLALSEMEQRLEAQANRNAISSTLVTCVTFMATLPLLYMLFKTS</sequence>
<organism>
    <name type="scientific">Rattus norvegicus</name>
    <name type="common">Rat</name>
    <dbReference type="NCBI Taxonomy" id="10116"/>
    <lineage>
        <taxon>Eukaryota</taxon>
        <taxon>Metazoa</taxon>
        <taxon>Chordata</taxon>
        <taxon>Craniata</taxon>
        <taxon>Vertebrata</taxon>
        <taxon>Euteleostomi</taxon>
        <taxon>Mammalia</taxon>
        <taxon>Eutheria</taxon>
        <taxon>Euarchontoglires</taxon>
        <taxon>Glires</taxon>
        <taxon>Rodentia</taxon>
        <taxon>Myomorpha</taxon>
        <taxon>Muroidea</taxon>
        <taxon>Muridae</taxon>
        <taxon>Murinae</taxon>
        <taxon>Rattus</taxon>
    </lineage>
</organism>
<comment type="function">
    <text evidence="1">Pore-forming subunit of the mitochondrial ATP-gated potassium channel (mitoK(ATP)). Together with ATP-binding subunit ABCB8/MITOSUR of the mitoK(ATP) channel, mediates ATP-dependent K(+) currents across the mitochondrial inner membrane. An increase in ATP intracellular levels closes the channel, inhibiting K(+) transport, whereas a decrease in ATP levels enhances K(+) uptake in the mitochondrial matrix. May contribute to the homeostatic control of cellular metabolism under stress conditions by regulating the mitochondrial matrix volume.</text>
</comment>
<comment type="catalytic activity">
    <reaction evidence="1">
        <text>K(+)(in) = K(+)(out)</text>
        <dbReference type="Rhea" id="RHEA:29463"/>
        <dbReference type="ChEBI" id="CHEBI:29103"/>
    </reaction>
</comment>
<comment type="activity regulation">
    <text evidence="2">Channel activity inhibited by ATP via ABCB8/MITOSUR subunit.</text>
</comment>
<comment type="subunit">
    <text evidence="1">The mitochondrial potassium channel (mitoK(ATP)) forms a heteromultimer.</text>
</comment>
<comment type="subcellular location">
    <subcellularLocation>
        <location evidence="1">Mitochondrion inner membrane</location>
        <topology evidence="3">Multi-pass membrane protein</topology>
    </subcellularLocation>
</comment>
<comment type="sequence caution" evidence="5">
    <conflict type="erroneous initiation">
        <sequence resource="EMBL-CDS" id="AAH87581"/>
    </conflict>
</comment>
<evidence type="ECO:0000250" key="1">
    <source>
        <dbReference type="UniProtKB" id="Q3URS9"/>
    </source>
</evidence>
<evidence type="ECO:0000250" key="2">
    <source>
        <dbReference type="UniProtKB" id="Q96ER9"/>
    </source>
</evidence>
<evidence type="ECO:0000255" key="3"/>
<evidence type="ECO:0000256" key="4">
    <source>
        <dbReference type="SAM" id="MobiDB-lite"/>
    </source>
</evidence>
<evidence type="ECO:0000305" key="5"/>
<protein>
    <recommendedName>
        <fullName evidence="1">Mitochondrial potassium channel</fullName>
        <shortName evidence="1">MITOK</shortName>
    </recommendedName>
    <alternativeName>
        <fullName>Coiled-coil domain-containing protein 51</fullName>
    </alternativeName>
</protein>
<reference key="1">
    <citation type="journal article" date="2004" name="Genome Res.">
        <title>The status, quality, and expansion of the NIH full-length cDNA project: the Mammalian Gene Collection (MGC).</title>
        <authorList>
            <consortium name="The MGC Project Team"/>
        </authorList>
    </citation>
    <scope>NUCLEOTIDE SEQUENCE [LARGE SCALE MRNA]</scope>
    <source>
        <tissue>Brain</tissue>
    </source>
</reference>
<accession>Q5PPN7</accession>
<feature type="transit peptide" description="Mitochondrion" evidence="3">
    <location>
        <begin position="1"/>
        <end position="35"/>
    </location>
</feature>
<feature type="chain" id="PRO_0000288870" description="Mitochondrial potassium channel" evidence="1">
    <location>
        <begin position="36"/>
        <end position="410"/>
    </location>
</feature>
<feature type="topological domain" description="Mitochondrial matrix" evidence="1">
    <location>
        <begin position="36"/>
        <end position="201"/>
    </location>
</feature>
<feature type="transmembrane region" description="Helical" evidence="3">
    <location>
        <begin position="202"/>
        <end position="222"/>
    </location>
</feature>
<feature type="topological domain" description="Mitochondrial intermembrane" evidence="1">
    <location>
        <begin position="223"/>
        <end position="385"/>
    </location>
</feature>
<feature type="transmembrane region" description="Helical" evidence="3">
    <location>
        <begin position="386"/>
        <end position="406"/>
    </location>
</feature>
<feature type="topological domain" description="Mitochondrial matrix" evidence="1">
    <location>
        <begin position="407"/>
        <end position="410"/>
    </location>
</feature>
<feature type="region of interest" description="Disordered" evidence="4">
    <location>
        <begin position="276"/>
        <end position="296"/>
    </location>
</feature>
<feature type="coiled-coil region" evidence="3">
    <location>
        <begin position="116"/>
        <end position="143"/>
    </location>
</feature>
<feature type="compositionally biased region" description="Low complexity" evidence="4">
    <location>
        <begin position="280"/>
        <end position="290"/>
    </location>
</feature>
<proteinExistence type="evidence at transcript level"/>
<gene>
    <name evidence="1" type="primary">Ccdc51</name>
    <name evidence="1" type="synonym">Mitok</name>
</gene>
<name>MITOK_RAT</name>
<keyword id="KW-0175">Coiled coil</keyword>
<keyword id="KW-0407">Ion channel</keyword>
<keyword id="KW-0406">Ion transport</keyword>
<keyword id="KW-0472">Membrane</keyword>
<keyword id="KW-0496">Mitochondrion</keyword>
<keyword id="KW-0999">Mitochondrion inner membrane</keyword>
<keyword id="KW-0630">Potassium</keyword>
<keyword id="KW-0631">Potassium channel</keyword>
<keyword id="KW-0633">Potassium transport</keyword>
<keyword id="KW-1185">Reference proteome</keyword>
<keyword id="KW-0809">Transit peptide</keyword>
<keyword id="KW-0812">Transmembrane</keyword>
<keyword id="KW-1133">Transmembrane helix</keyword>
<keyword id="KW-0813">Transport</keyword>
<dbReference type="EMBL" id="BC087581">
    <property type="protein sequence ID" value="AAH87581.1"/>
    <property type="status" value="ALT_INIT"/>
    <property type="molecule type" value="mRNA"/>
</dbReference>
<dbReference type="RefSeq" id="NP_001014120.2">
    <property type="nucleotide sequence ID" value="NM_001014098.2"/>
</dbReference>
<dbReference type="RefSeq" id="XP_006243853.1">
    <property type="nucleotide sequence ID" value="XM_006243791.4"/>
</dbReference>
<dbReference type="RefSeq" id="XP_006243854.1">
    <property type="nucleotide sequence ID" value="XM_006243792.5"/>
</dbReference>
<dbReference type="SMR" id="Q5PPN7"/>
<dbReference type="FunCoup" id="Q5PPN7">
    <property type="interactions" value="820"/>
</dbReference>
<dbReference type="STRING" id="10116.ENSRNOP00000070269"/>
<dbReference type="iPTMnet" id="Q5PPN7"/>
<dbReference type="PhosphoSitePlus" id="Q5PPN7"/>
<dbReference type="PaxDb" id="10116-ENSRNOP00000028075"/>
<dbReference type="GeneID" id="316008"/>
<dbReference type="KEGG" id="rno:316008"/>
<dbReference type="UCSC" id="RGD:1311466">
    <property type="organism name" value="rat"/>
</dbReference>
<dbReference type="AGR" id="RGD:1311466"/>
<dbReference type="CTD" id="79714"/>
<dbReference type="RGD" id="1311466">
    <property type="gene designation" value="Ccdc51"/>
</dbReference>
<dbReference type="eggNOG" id="ENOG502QWCS">
    <property type="taxonomic scope" value="Eukaryota"/>
</dbReference>
<dbReference type="HOGENOM" id="CLU_060968_0_0_1"/>
<dbReference type="InParanoid" id="Q5PPN7"/>
<dbReference type="PhylomeDB" id="Q5PPN7"/>
<dbReference type="TreeFam" id="TF318449"/>
<dbReference type="PRO" id="PR:Q5PPN7"/>
<dbReference type="Proteomes" id="UP000002494">
    <property type="component" value="Unplaced"/>
</dbReference>
<dbReference type="GO" id="GO:0062157">
    <property type="term" value="C:mitochondrial ATP-gated potassium channel complex"/>
    <property type="evidence" value="ECO:0000250"/>
    <property type="project" value="UniProtKB"/>
</dbReference>
<dbReference type="GO" id="GO:0005743">
    <property type="term" value="C:mitochondrial inner membrane"/>
    <property type="evidence" value="ECO:0000250"/>
    <property type="project" value="UniProtKB"/>
</dbReference>
<dbReference type="GO" id="GO:0034705">
    <property type="term" value="C:potassium channel complex"/>
    <property type="evidence" value="ECO:0000266"/>
    <property type="project" value="RGD"/>
</dbReference>
<dbReference type="GO" id="GO:0062156">
    <property type="term" value="F:mitochondrial ATP-gated potassium channel activity"/>
    <property type="evidence" value="ECO:0000250"/>
    <property type="project" value="UniProtKB"/>
</dbReference>
<dbReference type="GO" id="GO:0006884">
    <property type="term" value="P:cell volume homeostasis"/>
    <property type="evidence" value="ECO:0000266"/>
    <property type="project" value="RGD"/>
</dbReference>
<dbReference type="GO" id="GO:0140141">
    <property type="term" value="P:mitochondrial potassium ion transmembrane transport"/>
    <property type="evidence" value="ECO:0000266"/>
    <property type="project" value="RGD"/>
</dbReference>
<dbReference type="GO" id="GO:0071805">
    <property type="term" value="P:potassium ion transmembrane transport"/>
    <property type="evidence" value="ECO:0000250"/>
    <property type="project" value="UniProtKB"/>
</dbReference>
<dbReference type="InterPro" id="IPR037660">
    <property type="entry name" value="CCDC51"/>
</dbReference>
<dbReference type="PANTHER" id="PTHR28624">
    <property type="entry name" value="COILED-COIL DOMAIN-CONTAINING PROTEIN 51"/>
    <property type="match status" value="1"/>
</dbReference>
<dbReference type="PANTHER" id="PTHR28624:SF1">
    <property type="entry name" value="MITOCHONDRIAL POTASSIUM CHANNEL"/>
    <property type="match status" value="1"/>
</dbReference>